<organism>
    <name type="scientific">Orientia tsutsugamushi (strain Boryong)</name>
    <name type="common">Rickettsia tsutsugamushi</name>
    <dbReference type="NCBI Taxonomy" id="357244"/>
    <lineage>
        <taxon>Bacteria</taxon>
        <taxon>Pseudomonadati</taxon>
        <taxon>Pseudomonadota</taxon>
        <taxon>Alphaproteobacteria</taxon>
        <taxon>Rickettsiales</taxon>
        <taxon>Rickettsiaceae</taxon>
        <taxon>Rickettsieae</taxon>
        <taxon>Orientia</taxon>
    </lineage>
</organism>
<feature type="chain" id="PRO_0000335495" description="Translation initiation factor IF-2">
    <location>
        <begin position="1"/>
        <end position="848"/>
    </location>
</feature>
<feature type="domain" description="tr-type G">
    <location>
        <begin position="347"/>
        <end position="517"/>
    </location>
</feature>
<feature type="region of interest" description="Disordered" evidence="3">
    <location>
        <begin position="106"/>
        <end position="150"/>
    </location>
</feature>
<feature type="region of interest" description="G1" evidence="1">
    <location>
        <begin position="356"/>
        <end position="363"/>
    </location>
</feature>
<feature type="region of interest" description="G2" evidence="1">
    <location>
        <begin position="381"/>
        <end position="385"/>
    </location>
</feature>
<feature type="region of interest" description="G3" evidence="1">
    <location>
        <begin position="403"/>
        <end position="406"/>
    </location>
</feature>
<feature type="region of interest" description="G4" evidence="1">
    <location>
        <begin position="457"/>
        <end position="460"/>
    </location>
</feature>
<feature type="region of interest" description="G5" evidence="1">
    <location>
        <begin position="493"/>
        <end position="495"/>
    </location>
</feature>
<feature type="compositionally biased region" description="Polar residues" evidence="3">
    <location>
        <begin position="112"/>
        <end position="139"/>
    </location>
</feature>
<feature type="binding site" evidence="2">
    <location>
        <begin position="356"/>
        <end position="363"/>
    </location>
    <ligand>
        <name>GTP</name>
        <dbReference type="ChEBI" id="CHEBI:37565"/>
    </ligand>
</feature>
<feature type="binding site" evidence="2">
    <location>
        <begin position="403"/>
        <end position="407"/>
    </location>
    <ligand>
        <name>GTP</name>
        <dbReference type="ChEBI" id="CHEBI:37565"/>
    </ligand>
</feature>
<feature type="binding site" evidence="2">
    <location>
        <begin position="457"/>
        <end position="460"/>
    </location>
    <ligand>
        <name>GTP</name>
        <dbReference type="ChEBI" id="CHEBI:37565"/>
    </ligand>
</feature>
<accession>A5CEN6</accession>
<proteinExistence type="inferred from homology"/>
<reference key="1">
    <citation type="journal article" date="2007" name="Proc. Natl. Acad. Sci. U.S.A.">
        <title>The Orientia tsutsugamushi genome reveals massive proliferation of conjugative type IV secretion system and host-cell interaction genes.</title>
        <authorList>
            <person name="Cho N.-H."/>
            <person name="Kim H.-R."/>
            <person name="Lee J.-H."/>
            <person name="Kim S.-Y."/>
            <person name="Kim J."/>
            <person name="Cha S."/>
            <person name="Kim S.-Y."/>
            <person name="Darby A.C."/>
            <person name="Fuxelius H.-H."/>
            <person name="Yin J."/>
            <person name="Kim J.H."/>
            <person name="Kim J."/>
            <person name="Lee S.J."/>
            <person name="Koh Y.-S."/>
            <person name="Jang W.-J."/>
            <person name="Park K.-H."/>
            <person name="Andersson S.G.E."/>
            <person name="Choi M.-S."/>
            <person name="Kim I.-S."/>
        </authorList>
    </citation>
    <scope>NUCLEOTIDE SEQUENCE [LARGE SCALE GENOMIC DNA]</scope>
    <source>
        <strain>Boryong</strain>
    </source>
</reference>
<dbReference type="EMBL" id="AM494475">
    <property type="protein sequence ID" value="CAM80661.1"/>
    <property type="molecule type" value="Genomic_DNA"/>
</dbReference>
<dbReference type="RefSeq" id="WP_011944946.1">
    <property type="nucleotide sequence ID" value="NC_009488.1"/>
</dbReference>
<dbReference type="SMR" id="A5CEN6"/>
<dbReference type="KEGG" id="ots:OTBS_1568"/>
<dbReference type="eggNOG" id="COG0532">
    <property type="taxonomic scope" value="Bacteria"/>
</dbReference>
<dbReference type="HOGENOM" id="CLU_006301_10_2_5"/>
<dbReference type="Proteomes" id="UP000001565">
    <property type="component" value="Chromosome"/>
</dbReference>
<dbReference type="GO" id="GO:0005737">
    <property type="term" value="C:cytoplasm"/>
    <property type="evidence" value="ECO:0007669"/>
    <property type="project" value="UniProtKB-SubCell"/>
</dbReference>
<dbReference type="GO" id="GO:0005525">
    <property type="term" value="F:GTP binding"/>
    <property type="evidence" value="ECO:0007669"/>
    <property type="project" value="UniProtKB-KW"/>
</dbReference>
<dbReference type="GO" id="GO:0003924">
    <property type="term" value="F:GTPase activity"/>
    <property type="evidence" value="ECO:0007669"/>
    <property type="project" value="UniProtKB-UniRule"/>
</dbReference>
<dbReference type="GO" id="GO:0003743">
    <property type="term" value="F:translation initiation factor activity"/>
    <property type="evidence" value="ECO:0007669"/>
    <property type="project" value="UniProtKB-UniRule"/>
</dbReference>
<dbReference type="CDD" id="cd01887">
    <property type="entry name" value="IF2_eIF5B"/>
    <property type="match status" value="1"/>
</dbReference>
<dbReference type="CDD" id="cd03702">
    <property type="entry name" value="IF2_mtIF2_II"/>
    <property type="match status" value="1"/>
</dbReference>
<dbReference type="CDD" id="cd03692">
    <property type="entry name" value="mtIF2_IVc"/>
    <property type="match status" value="1"/>
</dbReference>
<dbReference type="FunFam" id="2.40.30.10:FF:000007">
    <property type="entry name" value="Translation initiation factor IF-2"/>
    <property type="match status" value="1"/>
</dbReference>
<dbReference type="FunFam" id="2.40.30.10:FF:000008">
    <property type="entry name" value="Translation initiation factor IF-2"/>
    <property type="match status" value="1"/>
</dbReference>
<dbReference type="FunFam" id="3.40.50.10050:FF:000001">
    <property type="entry name" value="Translation initiation factor IF-2"/>
    <property type="match status" value="1"/>
</dbReference>
<dbReference type="FunFam" id="3.40.50.300:FF:000019">
    <property type="entry name" value="Translation initiation factor IF-2"/>
    <property type="match status" value="1"/>
</dbReference>
<dbReference type="Gene3D" id="3.40.50.300">
    <property type="entry name" value="P-loop containing nucleotide triphosphate hydrolases"/>
    <property type="match status" value="1"/>
</dbReference>
<dbReference type="Gene3D" id="2.40.30.10">
    <property type="entry name" value="Translation factors"/>
    <property type="match status" value="2"/>
</dbReference>
<dbReference type="Gene3D" id="3.40.50.10050">
    <property type="entry name" value="Translation initiation factor IF- 2, domain 3"/>
    <property type="match status" value="1"/>
</dbReference>
<dbReference type="HAMAP" id="MF_00100_B">
    <property type="entry name" value="IF_2_B"/>
    <property type="match status" value="1"/>
</dbReference>
<dbReference type="InterPro" id="IPR053905">
    <property type="entry name" value="EF-G-like_DII"/>
</dbReference>
<dbReference type="InterPro" id="IPR044145">
    <property type="entry name" value="IF2_II"/>
</dbReference>
<dbReference type="InterPro" id="IPR006847">
    <property type="entry name" value="IF2_N"/>
</dbReference>
<dbReference type="InterPro" id="IPR027417">
    <property type="entry name" value="P-loop_NTPase"/>
</dbReference>
<dbReference type="InterPro" id="IPR005225">
    <property type="entry name" value="Small_GTP-bd"/>
</dbReference>
<dbReference type="InterPro" id="IPR000795">
    <property type="entry name" value="T_Tr_GTP-bd_dom"/>
</dbReference>
<dbReference type="InterPro" id="IPR000178">
    <property type="entry name" value="TF_IF2_bacterial-like"/>
</dbReference>
<dbReference type="InterPro" id="IPR015760">
    <property type="entry name" value="TIF_IF2"/>
</dbReference>
<dbReference type="InterPro" id="IPR023115">
    <property type="entry name" value="TIF_IF2_dom3"/>
</dbReference>
<dbReference type="InterPro" id="IPR036925">
    <property type="entry name" value="TIF_IF2_dom3_sf"/>
</dbReference>
<dbReference type="InterPro" id="IPR009000">
    <property type="entry name" value="Transl_B-barrel_sf"/>
</dbReference>
<dbReference type="NCBIfam" id="TIGR00487">
    <property type="entry name" value="IF-2"/>
    <property type="match status" value="1"/>
</dbReference>
<dbReference type="NCBIfam" id="TIGR00231">
    <property type="entry name" value="small_GTP"/>
    <property type="match status" value="1"/>
</dbReference>
<dbReference type="PANTHER" id="PTHR43381:SF5">
    <property type="entry name" value="TR-TYPE G DOMAIN-CONTAINING PROTEIN"/>
    <property type="match status" value="1"/>
</dbReference>
<dbReference type="PANTHER" id="PTHR43381">
    <property type="entry name" value="TRANSLATION INITIATION FACTOR IF-2-RELATED"/>
    <property type="match status" value="1"/>
</dbReference>
<dbReference type="Pfam" id="PF22042">
    <property type="entry name" value="EF-G_D2"/>
    <property type="match status" value="1"/>
</dbReference>
<dbReference type="Pfam" id="PF00009">
    <property type="entry name" value="GTP_EFTU"/>
    <property type="match status" value="1"/>
</dbReference>
<dbReference type="Pfam" id="PF11987">
    <property type="entry name" value="IF-2"/>
    <property type="match status" value="1"/>
</dbReference>
<dbReference type="Pfam" id="PF04760">
    <property type="entry name" value="IF2_N"/>
    <property type="match status" value="1"/>
</dbReference>
<dbReference type="SUPFAM" id="SSF52156">
    <property type="entry name" value="Initiation factor IF2/eIF5b, domain 3"/>
    <property type="match status" value="1"/>
</dbReference>
<dbReference type="SUPFAM" id="SSF52540">
    <property type="entry name" value="P-loop containing nucleoside triphosphate hydrolases"/>
    <property type="match status" value="1"/>
</dbReference>
<dbReference type="SUPFAM" id="SSF50447">
    <property type="entry name" value="Translation proteins"/>
    <property type="match status" value="2"/>
</dbReference>
<dbReference type="PROSITE" id="PS51722">
    <property type="entry name" value="G_TR_2"/>
    <property type="match status" value="1"/>
</dbReference>
<dbReference type="PROSITE" id="PS01176">
    <property type="entry name" value="IF2"/>
    <property type="match status" value="1"/>
</dbReference>
<name>IF2_ORITB</name>
<comment type="function">
    <text evidence="2">One of the essential components for the initiation of protein synthesis. Protects formylmethionyl-tRNA from spontaneous hydrolysis and promotes its binding to the 30S ribosomal subunits. Also involved in the hydrolysis of GTP during the formation of the 70S ribosomal complex.</text>
</comment>
<comment type="subcellular location">
    <subcellularLocation>
        <location evidence="2">Cytoplasm</location>
    </subcellularLocation>
</comment>
<comment type="similarity">
    <text evidence="2">Belongs to the TRAFAC class translation factor GTPase superfamily. Classic translation factor GTPase family. IF-2 subfamily.</text>
</comment>
<keyword id="KW-0963">Cytoplasm</keyword>
<keyword id="KW-0342">GTP-binding</keyword>
<keyword id="KW-0396">Initiation factor</keyword>
<keyword id="KW-0547">Nucleotide-binding</keyword>
<keyword id="KW-0648">Protein biosynthesis</keyword>
<keyword id="KW-1185">Reference proteome</keyword>
<protein>
    <recommendedName>
        <fullName evidence="2">Translation initiation factor IF-2</fullName>
    </recommendedName>
</protein>
<gene>
    <name evidence="2" type="primary">infB</name>
    <name type="ordered locus">OTBS_1568</name>
</gene>
<sequence length="848" mass="93393">MTDKHNEEGKEKKLKLPSKMIIGKHVDSKKFKTSYFTSHNNSVTVEIKGGRKFSSSSSLPHKINTQISTIDEFNEKISLLKKAASFAKSEEYRSNVTNFSSTVEVTEQQTEAENSTNINLSEQTIKNNSHQSSSNTIETTQEKKQNDDLSSNITPVEAITQLEPNQKILQNQQNSSSISLNSIISKPQNKSSIENNVEFETEATSTKSSAIWTKKNNSAKPKKSDIYQMLDSDSKSKTRSFAAIKRARDKEKRKLQNNALTKKIYREVIIPDTITVNELALRMSEKLSDVMQALLKLGIKANINQSIDVDTAELIAISLGHSVKRTQDSDVENILHSDKDTQDSLLPRAPIITVMGHVDHGKTCLLDALRSTDVISTEAGGITQHIGAYKVNLPNNKSITFIDTPGHEAFSEIRTRGAKVTDIVVLVIAANDGIKPQTIEAINHAKAAKVPILVAINKIDAPDANPDKVKNALLAHNIVPEDLGGETLVVPISALKKINLDKLEEAILLLADMLELKANPNALASGTVIESQVDHKSGVIATILVQRGTLKIGDILIAGNGFGKVKRMINDKNQQVNYAYPSDPVKILGLSQIPNAGDAVAVVQNEKQARSIVDYRIRKAKEEQDLKVHNISLEELLKQASANQFKELSLILKTDVHGSLEAIVASINKIVNDEVKIKILHAAVGVINESDIILANASNATILGFNVKIDSTASIKAERNKTNIKYYSIIYDLIDYVKSAVSGMLSPIIHEEYTGRAEVRAVFNITKVGKIAGCYVTKGYIQRNSKVKLLRNNEVIFSGPLQTLKRFKEHTKEVKEGFECGIELANYYDINVGDIIEAFIVTEEKAKL</sequence>
<evidence type="ECO:0000250" key="1"/>
<evidence type="ECO:0000255" key="2">
    <source>
        <dbReference type="HAMAP-Rule" id="MF_00100"/>
    </source>
</evidence>
<evidence type="ECO:0000256" key="3">
    <source>
        <dbReference type="SAM" id="MobiDB-lite"/>
    </source>
</evidence>